<name>6PGL_THEMA</name>
<keyword id="KW-0002">3D-structure</keyword>
<keyword id="KW-0378">Hydrolase</keyword>
<keyword id="KW-1185">Reference proteome</keyword>
<comment type="function">
    <text>Hydrolysis of 6-phosphogluconolactone to 6-phosphogluconate.</text>
</comment>
<comment type="catalytic activity">
    <reaction>
        <text>6-phospho-D-glucono-1,5-lactone + H2O = 6-phospho-D-gluconate + H(+)</text>
        <dbReference type="Rhea" id="RHEA:12556"/>
        <dbReference type="ChEBI" id="CHEBI:15377"/>
        <dbReference type="ChEBI" id="CHEBI:15378"/>
        <dbReference type="ChEBI" id="CHEBI:57955"/>
        <dbReference type="ChEBI" id="CHEBI:58759"/>
        <dbReference type="EC" id="3.1.1.31"/>
    </reaction>
</comment>
<comment type="pathway">
    <text>Carbohydrate degradation; pentose phosphate pathway; D-ribulose 5-phosphate from D-glucose 6-phosphate (oxidative stage): step 2/3.</text>
</comment>
<comment type="similarity">
    <text evidence="1">Belongs to the glucosamine/galactosamine-6-phosphate isomerase family. 6-phosphogluconolactonase subfamily.</text>
</comment>
<accession>Q9X0N8</accession>
<protein>
    <recommendedName>
        <fullName>6-phosphogluconolactonase</fullName>
        <shortName>6PGL</shortName>
        <ecNumber>3.1.1.31</ecNumber>
    </recommendedName>
</protein>
<feature type="chain" id="PRO_0000090108" description="6-phosphogluconolactonase">
    <location>
        <begin position="1"/>
        <end position="220"/>
    </location>
</feature>
<feature type="strand" evidence="2">
    <location>
        <begin position="4"/>
        <end position="11"/>
    </location>
</feature>
<feature type="helix" evidence="2">
    <location>
        <begin position="13"/>
        <end position="31"/>
    </location>
</feature>
<feature type="strand" evidence="2">
    <location>
        <begin position="35"/>
        <end position="39"/>
    </location>
</feature>
<feature type="helix" evidence="2">
    <location>
        <begin position="45"/>
        <end position="52"/>
    </location>
</feature>
<feature type="helix" evidence="2">
    <location>
        <begin position="59"/>
        <end position="61"/>
    </location>
</feature>
<feature type="strand" evidence="2">
    <location>
        <begin position="62"/>
        <end position="72"/>
    </location>
</feature>
<feature type="helix" evidence="2">
    <location>
        <begin position="80"/>
        <end position="87"/>
    </location>
</feature>
<feature type="turn" evidence="2">
    <location>
        <begin position="88"/>
        <end position="91"/>
    </location>
</feature>
<feature type="helix" evidence="2">
    <location>
        <begin position="96"/>
        <end position="98"/>
    </location>
</feature>
<feature type="helix" evidence="2">
    <location>
        <begin position="108"/>
        <end position="122"/>
    </location>
</feature>
<feature type="strand" evidence="2">
    <location>
        <begin position="127"/>
        <end position="131"/>
    </location>
</feature>
<feature type="helix" evidence="2">
    <location>
        <begin position="145"/>
        <end position="148"/>
    </location>
</feature>
<feature type="strand" evidence="2">
    <location>
        <begin position="151"/>
        <end position="156"/>
    </location>
</feature>
<feature type="strand" evidence="2">
    <location>
        <begin position="158"/>
        <end position="160"/>
    </location>
</feature>
<feature type="turn" evidence="2">
    <location>
        <begin position="161"/>
        <end position="164"/>
    </location>
</feature>
<feature type="strand" evidence="2">
    <location>
        <begin position="167"/>
        <end position="170"/>
    </location>
</feature>
<feature type="helix" evidence="2">
    <location>
        <begin position="172"/>
        <end position="175"/>
    </location>
</feature>
<feature type="strand" evidence="2">
    <location>
        <begin position="179"/>
        <end position="187"/>
    </location>
</feature>
<feature type="helix" evidence="2">
    <location>
        <begin position="188"/>
        <end position="198"/>
    </location>
</feature>
<feature type="helix" evidence="2">
    <location>
        <begin position="204"/>
        <end position="207"/>
    </location>
</feature>
<feature type="strand" evidence="2">
    <location>
        <begin position="211"/>
        <end position="219"/>
    </location>
</feature>
<gene>
    <name type="primary">pgl</name>
    <name type="synonym">devB</name>
    <name type="ordered locus">TM_1154</name>
</gene>
<reference key="1">
    <citation type="journal article" date="1999" name="Nature">
        <title>Evidence for lateral gene transfer between Archaea and Bacteria from genome sequence of Thermotoga maritima.</title>
        <authorList>
            <person name="Nelson K.E."/>
            <person name="Clayton R.A."/>
            <person name="Gill S.R."/>
            <person name="Gwinn M.L."/>
            <person name="Dodson R.J."/>
            <person name="Haft D.H."/>
            <person name="Hickey E.K."/>
            <person name="Peterson J.D."/>
            <person name="Nelson W.C."/>
            <person name="Ketchum K.A."/>
            <person name="McDonald L.A."/>
            <person name="Utterback T.R."/>
            <person name="Malek J.A."/>
            <person name="Linher K.D."/>
            <person name="Garrett M.M."/>
            <person name="Stewart A.M."/>
            <person name="Cotton M.D."/>
            <person name="Pratt M.S."/>
            <person name="Phillips C.A."/>
            <person name="Richardson D.L."/>
            <person name="Heidelberg J.F."/>
            <person name="Sutton G.G."/>
            <person name="Fleischmann R.D."/>
            <person name="Eisen J.A."/>
            <person name="White O."/>
            <person name="Salzberg S.L."/>
            <person name="Smith H.O."/>
            <person name="Venter J.C."/>
            <person name="Fraser C.M."/>
        </authorList>
    </citation>
    <scope>NUCLEOTIDE SEQUENCE [LARGE SCALE GENOMIC DNA]</scope>
    <source>
        <strain>ATCC 43589 / DSM 3109 / JCM 10099 / NBRC 100826 / MSB8</strain>
    </source>
</reference>
<evidence type="ECO:0000305" key="1"/>
<evidence type="ECO:0007829" key="2">
    <source>
        <dbReference type="PDB" id="1VL1"/>
    </source>
</evidence>
<sequence length="220" mass="25325">MEKTVIYLLEDGYVDFVVEKIRTKMEKLLEEKDKIFVVLAGGRTPLPVYEKLAEQKFPWNRIHFFLSDERYVPLDSDQSNFRNINEVLFSRAKIPSGNVHYVDTSLPIEKACEKYEREIRSATDQFDLAILGMGPDGHVASIFDLETGNKDNLVTFTDPSGDPKVPRVTLTFRALNTSLYVLFLIRGKEKINRLTEILKDTPLPAYFVRGKEKTVWFVGK</sequence>
<organism>
    <name type="scientific">Thermotoga maritima (strain ATCC 43589 / DSM 3109 / JCM 10099 / NBRC 100826 / MSB8)</name>
    <dbReference type="NCBI Taxonomy" id="243274"/>
    <lineage>
        <taxon>Bacteria</taxon>
        <taxon>Thermotogati</taxon>
        <taxon>Thermotogota</taxon>
        <taxon>Thermotogae</taxon>
        <taxon>Thermotogales</taxon>
        <taxon>Thermotogaceae</taxon>
        <taxon>Thermotoga</taxon>
    </lineage>
</organism>
<dbReference type="EC" id="3.1.1.31"/>
<dbReference type="EMBL" id="AE000512">
    <property type="protein sequence ID" value="AAD36230.1"/>
    <property type="molecule type" value="Genomic_DNA"/>
</dbReference>
<dbReference type="PIR" id="F72289">
    <property type="entry name" value="F72289"/>
</dbReference>
<dbReference type="RefSeq" id="NP_228960.1">
    <property type="nucleotide sequence ID" value="NC_000853.1"/>
</dbReference>
<dbReference type="RefSeq" id="WP_008195599.1">
    <property type="nucleotide sequence ID" value="NZ_CP011107.1"/>
</dbReference>
<dbReference type="PDB" id="1PBT">
    <property type="method" value="X-ray"/>
    <property type="resolution" value="1.70 A"/>
    <property type="chains" value="A=1-220"/>
</dbReference>
<dbReference type="PDB" id="1VL1">
    <property type="method" value="X-ray"/>
    <property type="resolution" value="1.55 A"/>
    <property type="chains" value="A=1-220"/>
</dbReference>
<dbReference type="PDBsum" id="1PBT"/>
<dbReference type="PDBsum" id="1VL1"/>
<dbReference type="SMR" id="Q9X0N8"/>
<dbReference type="FunCoup" id="Q9X0N8">
    <property type="interactions" value="202"/>
</dbReference>
<dbReference type="STRING" id="243274.TM_1154"/>
<dbReference type="DrugBank" id="DB04272">
    <property type="generic name" value="Citric acid"/>
</dbReference>
<dbReference type="DrugBank" id="DB01942">
    <property type="generic name" value="Formic acid"/>
</dbReference>
<dbReference type="PaxDb" id="243274-THEMA_08570"/>
<dbReference type="EnsemblBacteria" id="AAD36230">
    <property type="protein sequence ID" value="AAD36230"/>
    <property type="gene ID" value="TM_1154"/>
</dbReference>
<dbReference type="KEGG" id="tma:TM1154"/>
<dbReference type="KEGG" id="tmi:THEMA_08570"/>
<dbReference type="KEGG" id="tmm:Tmari_1161"/>
<dbReference type="KEGG" id="tmw:THMA_1178"/>
<dbReference type="eggNOG" id="COG0363">
    <property type="taxonomic scope" value="Bacteria"/>
</dbReference>
<dbReference type="InParanoid" id="Q9X0N8"/>
<dbReference type="OrthoDB" id="9810967at2"/>
<dbReference type="UniPathway" id="UPA00115">
    <property type="reaction ID" value="UER00409"/>
</dbReference>
<dbReference type="EvolutionaryTrace" id="Q9X0N8"/>
<dbReference type="Proteomes" id="UP000008183">
    <property type="component" value="Chromosome"/>
</dbReference>
<dbReference type="GO" id="GO:0017057">
    <property type="term" value="F:6-phosphogluconolactonase activity"/>
    <property type="evidence" value="ECO:0007669"/>
    <property type="project" value="UniProtKB-EC"/>
</dbReference>
<dbReference type="GO" id="GO:0005975">
    <property type="term" value="P:carbohydrate metabolic process"/>
    <property type="evidence" value="ECO:0007669"/>
    <property type="project" value="InterPro"/>
</dbReference>
<dbReference type="GO" id="GO:0006098">
    <property type="term" value="P:pentose-phosphate shunt"/>
    <property type="evidence" value="ECO:0007669"/>
    <property type="project" value="UniProtKB-UniPathway"/>
</dbReference>
<dbReference type="CDD" id="cd01400">
    <property type="entry name" value="6PGL"/>
    <property type="match status" value="1"/>
</dbReference>
<dbReference type="Gene3D" id="3.40.50.1360">
    <property type="match status" value="1"/>
</dbReference>
<dbReference type="InterPro" id="IPR005900">
    <property type="entry name" value="6-phosphogluconolactonase_DevB"/>
</dbReference>
<dbReference type="InterPro" id="IPR006148">
    <property type="entry name" value="Glc/Gal-6P_isomerase"/>
</dbReference>
<dbReference type="InterPro" id="IPR037171">
    <property type="entry name" value="NagB/RpiA_transferase-like"/>
</dbReference>
<dbReference type="InterPro" id="IPR039104">
    <property type="entry name" value="PGLS"/>
</dbReference>
<dbReference type="NCBIfam" id="TIGR01198">
    <property type="entry name" value="pgl"/>
    <property type="match status" value="1"/>
</dbReference>
<dbReference type="PANTHER" id="PTHR11054">
    <property type="entry name" value="6-PHOSPHOGLUCONOLACTONASE"/>
    <property type="match status" value="1"/>
</dbReference>
<dbReference type="PANTHER" id="PTHR11054:SF0">
    <property type="entry name" value="6-PHOSPHOGLUCONOLACTONASE"/>
    <property type="match status" value="1"/>
</dbReference>
<dbReference type="Pfam" id="PF01182">
    <property type="entry name" value="Glucosamine_iso"/>
    <property type="match status" value="1"/>
</dbReference>
<dbReference type="SUPFAM" id="SSF100950">
    <property type="entry name" value="NagB/RpiA/CoA transferase-like"/>
    <property type="match status" value="1"/>
</dbReference>
<proteinExistence type="evidence at protein level"/>